<gene>
    <name evidence="1" type="primary">ispE</name>
    <name type="ordered locus">SACE_0807</name>
</gene>
<name>ISPE_SACEN</name>
<dbReference type="EC" id="2.7.1.148" evidence="1"/>
<dbReference type="EMBL" id="AM420293">
    <property type="protein sequence ID" value="CAM00147.1"/>
    <property type="molecule type" value="Genomic_DNA"/>
</dbReference>
<dbReference type="RefSeq" id="WP_009944264.1">
    <property type="nucleotide sequence ID" value="NC_009142.1"/>
</dbReference>
<dbReference type="SMR" id="A4F7X3"/>
<dbReference type="STRING" id="405948.SACE_0807"/>
<dbReference type="KEGG" id="sen:SACE_0807"/>
<dbReference type="eggNOG" id="COG1947">
    <property type="taxonomic scope" value="Bacteria"/>
</dbReference>
<dbReference type="HOGENOM" id="CLU_053057_1_1_11"/>
<dbReference type="UniPathway" id="UPA00056">
    <property type="reaction ID" value="UER00094"/>
</dbReference>
<dbReference type="Proteomes" id="UP000006728">
    <property type="component" value="Chromosome"/>
</dbReference>
<dbReference type="GO" id="GO:0050515">
    <property type="term" value="F:4-(cytidine 5'-diphospho)-2-C-methyl-D-erythritol kinase activity"/>
    <property type="evidence" value="ECO:0007669"/>
    <property type="project" value="UniProtKB-UniRule"/>
</dbReference>
<dbReference type="GO" id="GO:0005524">
    <property type="term" value="F:ATP binding"/>
    <property type="evidence" value="ECO:0007669"/>
    <property type="project" value="UniProtKB-UniRule"/>
</dbReference>
<dbReference type="GO" id="GO:0019288">
    <property type="term" value="P:isopentenyl diphosphate biosynthetic process, methylerythritol 4-phosphate pathway"/>
    <property type="evidence" value="ECO:0007669"/>
    <property type="project" value="UniProtKB-UniRule"/>
</dbReference>
<dbReference type="GO" id="GO:0016114">
    <property type="term" value="P:terpenoid biosynthetic process"/>
    <property type="evidence" value="ECO:0007669"/>
    <property type="project" value="InterPro"/>
</dbReference>
<dbReference type="Gene3D" id="3.30.230.10">
    <property type="match status" value="1"/>
</dbReference>
<dbReference type="Gene3D" id="3.30.70.890">
    <property type="entry name" value="GHMP kinase, C-terminal domain"/>
    <property type="match status" value="1"/>
</dbReference>
<dbReference type="HAMAP" id="MF_00061">
    <property type="entry name" value="IspE"/>
    <property type="match status" value="1"/>
</dbReference>
<dbReference type="InterPro" id="IPR013750">
    <property type="entry name" value="GHMP_kinase_C_dom"/>
</dbReference>
<dbReference type="InterPro" id="IPR036554">
    <property type="entry name" value="GHMP_kinase_C_sf"/>
</dbReference>
<dbReference type="InterPro" id="IPR006204">
    <property type="entry name" value="GHMP_kinase_N_dom"/>
</dbReference>
<dbReference type="InterPro" id="IPR004424">
    <property type="entry name" value="IspE"/>
</dbReference>
<dbReference type="InterPro" id="IPR020568">
    <property type="entry name" value="Ribosomal_Su5_D2-typ_SF"/>
</dbReference>
<dbReference type="InterPro" id="IPR014721">
    <property type="entry name" value="Ribsml_uS5_D2-typ_fold_subgr"/>
</dbReference>
<dbReference type="NCBIfam" id="TIGR00154">
    <property type="entry name" value="ispE"/>
    <property type="match status" value="1"/>
</dbReference>
<dbReference type="NCBIfam" id="NF002870">
    <property type="entry name" value="PRK03188.1"/>
    <property type="match status" value="1"/>
</dbReference>
<dbReference type="PANTHER" id="PTHR43527">
    <property type="entry name" value="4-DIPHOSPHOCYTIDYL-2-C-METHYL-D-ERYTHRITOL KINASE, CHLOROPLASTIC"/>
    <property type="match status" value="1"/>
</dbReference>
<dbReference type="PANTHER" id="PTHR43527:SF2">
    <property type="entry name" value="4-DIPHOSPHOCYTIDYL-2-C-METHYL-D-ERYTHRITOL KINASE, CHLOROPLASTIC"/>
    <property type="match status" value="1"/>
</dbReference>
<dbReference type="Pfam" id="PF08544">
    <property type="entry name" value="GHMP_kinases_C"/>
    <property type="match status" value="1"/>
</dbReference>
<dbReference type="Pfam" id="PF00288">
    <property type="entry name" value="GHMP_kinases_N"/>
    <property type="match status" value="1"/>
</dbReference>
<dbReference type="PIRSF" id="PIRSF010376">
    <property type="entry name" value="IspE"/>
    <property type="match status" value="1"/>
</dbReference>
<dbReference type="SUPFAM" id="SSF55060">
    <property type="entry name" value="GHMP Kinase, C-terminal domain"/>
    <property type="match status" value="1"/>
</dbReference>
<dbReference type="SUPFAM" id="SSF54211">
    <property type="entry name" value="Ribosomal protein S5 domain 2-like"/>
    <property type="match status" value="1"/>
</dbReference>
<protein>
    <recommendedName>
        <fullName evidence="1">4-diphosphocytidyl-2-C-methyl-D-erythritol kinase</fullName>
        <shortName evidence="1">CMK</shortName>
        <ecNumber evidence="1">2.7.1.148</ecNumber>
    </recommendedName>
    <alternativeName>
        <fullName evidence="1">4-(cytidine-5'-diphospho)-2-C-methyl-D-erythritol kinase</fullName>
    </alternativeName>
</protein>
<reference key="1">
    <citation type="journal article" date="2007" name="Nat. Biotechnol.">
        <title>Complete genome sequence of the erythromycin-producing bacterium Saccharopolyspora erythraea NRRL23338.</title>
        <authorList>
            <person name="Oliynyk M."/>
            <person name="Samborskyy M."/>
            <person name="Lester J.B."/>
            <person name="Mironenko T."/>
            <person name="Scott N."/>
            <person name="Dickens S."/>
            <person name="Haydock S.F."/>
            <person name="Leadlay P.F."/>
        </authorList>
    </citation>
    <scope>NUCLEOTIDE SEQUENCE [LARGE SCALE GENOMIC DNA]</scope>
    <source>
        <strain>ATCC 11635 / DSM 40517 / JCM 4748 / NBRC 13426 / NCIMB 8594 / NRRL 2338</strain>
    </source>
</reference>
<comment type="function">
    <text evidence="1">Catalyzes the phosphorylation of the position 2 hydroxy group of 4-diphosphocytidyl-2C-methyl-D-erythritol.</text>
</comment>
<comment type="catalytic activity">
    <reaction evidence="1">
        <text>4-CDP-2-C-methyl-D-erythritol + ATP = 4-CDP-2-C-methyl-D-erythritol 2-phosphate + ADP + H(+)</text>
        <dbReference type="Rhea" id="RHEA:18437"/>
        <dbReference type="ChEBI" id="CHEBI:15378"/>
        <dbReference type="ChEBI" id="CHEBI:30616"/>
        <dbReference type="ChEBI" id="CHEBI:57823"/>
        <dbReference type="ChEBI" id="CHEBI:57919"/>
        <dbReference type="ChEBI" id="CHEBI:456216"/>
        <dbReference type="EC" id="2.7.1.148"/>
    </reaction>
</comment>
<comment type="pathway">
    <text evidence="1">Isoprenoid biosynthesis; isopentenyl diphosphate biosynthesis via DXP pathway; isopentenyl diphosphate from 1-deoxy-D-xylulose 5-phosphate: step 3/6.</text>
</comment>
<comment type="similarity">
    <text evidence="1">Belongs to the GHMP kinase family. IspE subfamily.</text>
</comment>
<organism>
    <name type="scientific">Saccharopolyspora erythraea (strain ATCC 11635 / DSM 40517 / JCM 4748 / NBRC 13426 / NCIMB 8594 / NRRL 2338)</name>
    <dbReference type="NCBI Taxonomy" id="405948"/>
    <lineage>
        <taxon>Bacteria</taxon>
        <taxon>Bacillati</taxon>
        <taxon>Actinomycetota</taxon>
        <taxon>Actinomycetes</taxon>
        <taxon>Pseudonocardiales</taxon>
        <taxon>Pseudonocardiaceae</taxon>
        <taxon>Saccharopolyspora</taxon>
    </lineage>
</organism>
<keyword id="KW-0067">ATP-binding</keyword>
<keyword id="KW-0414">Isoprene biosynthesis</keyword>
<keyword id="KW-0418">Kinase</keyword>
<keyword id="KW-0547">Nucleotide-binding</keyword>
<keyword id="KW-1185">Reference proteome</keyword>
<keyword id="KW-0808">Transferase</keyword>
<proteinExistence type="inferred from homology"/>
<feature type="chain" id="PRO_0000335752" description="4-diphosphocytidyl-2-C-methyl-D-erythritol kinase">
    <location>
        <begin position="1"/>
        <end position="318"/>
    </location>
</feature>
<feature type="region of interest" description="Disordered" evidence="2">
    <location>
        <begin position="298"/>
        <end position="318"/>
    </location>
</feature>
<feature type="active site" evidence="1">
    <location>
        <position position="13"/>
    </location>
</feature>
<feature type="active site" evidence="1">
    <location>
        <position position="143"/>
    </location>
</feature>
<feature type="binding site" evidence="1">
    <location>
        <begin position="101"/>
        <end position="111"/>
    </location>
    <ligand>
        <name>ATP</name>
        <dbReference type="ChEBI" id="CHEBI:30616"/>
    </ligand>
</feature>
<accession>A4F7X3</accession>
<sequence length="318" mass="33102">MVPTPITVRVPAKVNLHLSVGDTREDGYHELVTVFQALSMTDEVTVHIADEPGIEVRGEGADSVPTGPSNLAWKAVRALAERCGRDPDEPGVRVSINKGIPVAGGMAGGSADAAAALLALNHLWRLEMGRDELAGIAADIGSDVPFALQGGTALGTGRGEQLIPVLARHTFHWVIALDRRGLETPGVFSELDRLREESRPNRVGEVEPVLEALASGDPRQLALLLGNDLQAAAVSLRPGLRRTLRAGVQAGALAGIVSGSGPTCAFLCTDADAAVRVAAELSGAGVCRTVRVAQGPVPGARLVTDDRADRPTPPQVHA</sequence>
<evidence type="ECO:0000255" key="1">
    <source>
        <dbReference type="HAMAP-Rule" id="MF_00061"/>
    </source>
</evidence>
<evidence type="ECO:0000256" key="2">
    <source>
        <dbReference type="SAM" id="MobiDB-lite"/>
    </source>
</evidence>